<sequence length="161" mass="18353">MPSFDIVSEVDEVELRNAVENSRRELSGRFDFRGKDASIDYKDHVVTLTAEDDFQCKQLVDILRTQLSKRNVEPSTMDVDEKSVHSGKTFSLKVRFKQGIETDIAKKIVKMVKDSKIKVQSQIQGDTVRVTGKARDDLQAVMALVRQADLGQPFQFNNFRD</sequence>
<organism>
    <name type="scientific">Shewanella oneidensis (strain ATCC 700550 / JCM 31522 / CIP 106686 / LMG 19005 / NCIMB 14063 / MR-1)</name>
    <dbReference type="NCBI Taxonomy" id="211586"/>
    <lineage>
        <taxon>Bacteria</taxon>
        <taxon>Pseudomonadati</taxon>
        <taxon>Pseudomonadota</taxon>
        <taxon>Gammaproteobacteria</taxon>
        <taxon>Alteromonadales</taxon>
        <taxon>Shewanellaceae</taxon>
        <taxon>Shewanella</taxon>
    </lineage>
</organism>
<name>Y3815_SHEON</name>
<keyword id="KW-0547">Nucleotide-binding</keyword>
<keyword id="KW-1185">Reference proteome</keyword>
<dbReference type="EMBL" id="AE014299">
    <property type="protein sequence ID" value="AAN56795.1"/>
    <property type="molecule type" value="Genomic_DNA"/>
</dbReference>
<dbReference type="RefSeq" id="NP_719351.1">
    <property type="nucleotide sequence ID" value="NC_004347.2"/>
</dbReference>
<dbReference type="RefSeq" id="WP_011073585.1">
    <property type="nucleotide sequence ID" value="NZ_CP053946.1"/>
</dbReference>
<dbReference type="SMR" id="Q8EAS7"/>
<dbReference type="STRING" id="211586.SO_3815"/>
<dbReference type="PaxDb" id="211586-SO_3815"/>
<dbReference type="KEGG" id="son:SO_3815"/>
<dbReference type="PATRIC" id="fig|211586.12.peg.3697"/>
<dbReference type="eggNOG" id="COG1666">
    <property type="taxonomic scope" value="Bacteria"/>
</dbReference>
<dbReference type="HOGENOM" id="CLU_099839_1_0_6"/>
<dbReference type="OrthoDB" id="9801447at2"/>
<dbReference type="PhylomeDB" id="Q8EAS7"/>
<dbReference type="BioCyc" id="SONE211586:G1GMP-3541-MONOMER"/>
<dbReference type="Proteomes" id="UP000008186">
    <property type="component" value="Chromosome"/>
</dbReference>
<dbReference type="GO" id="GO:0005829">
    <property type="term" value="C:cytosol"/>
    <property type="evidence" value="ECO:0000318"/>
    <property type="project" value="GO_Central"/>
</dbReference>
<dbReference type="GO" id="GO:0000166">
    <property type="term" value="F:nucleotide binding"/>
    <property type="evidence" value="ECO:0000318"/>
    <property type="project" value="GO_Central"/>
</dbReference>
<dbReference type="CDD" id="cd11740">
    <property type="entry name" value="YajQ_like"/>
    <property type="match status" value="1"/>
</dbReference>
<dbReference type="FunFam" id="3.30.70.860:FF:000001">
    <property type="entry name" value="UPF0234 protein YajQ"/>
    <property type="match status" value="1"/>
</dbReference>
<dbReference type="FunFam" id="3.30.70.990:FF:000001">
    <property type="entry name" value="UPF0234 protein YajQ"/>
    <property type="match status" value="1"/>
</dbReference>
<dbReference type="Gene3D" id="3.30.70.860">
    <property type="match status" value="1"/>
</dbReference>
<dbReference type="Gene3D" id="3.30.70.990">
    <property type="entry name" value="YajQ-like, domain 2"/>
    <property type="match status" value="1"/>
</dbReference>
<dbReference type="HAMAP" id="MF_00632">
    <property type="entry name" value="YajQ"/>
    <property type="match status" value="1"/>
</dbReference>
<dbReference type="InterPro" id="IPR007551">
    <property type="entry name" value="DUF520"/>
</dbReference>
<dbReference type="InterPro" id="IPR035571">
    <property type="entry name" value="UPF0234-like_C"/>
</dbReference>
<dbReference type="InterPro" id="IPR035570">
    <property type="entry name" value="UPF0234_N"/>
</dbReference>
<dbReference type="InterPro" id="IPR036183">
    <property type="entry name" value="YajQ-like_sf"/>
</dbReference>
<dbReference type="NCBIfam" id="NF003819">
    <property type="entry name" value="PRK05412.1"/>
    <property type="match status" value="1"/>
</dbReference>
<dbReference type="PANTHER" id="PTHR30476">
    <property type="entry name" value="UPF0234 PROTEIN YAJQ"/>
    <property type="match status" value="1"/>
</dbReference>
<dbReference type="PANTHER" id="PTHR30476:SF0">
    <property type="entry name" value="UPF0234 PROTEIN YAJQ"/>
    <property type="match status" value="1"/>
</dbReference>
<dbReference type="Pfam" id="PF04461">
    <property type="entry name" value="DUF520"/>
    <property type="match status" value="1"/>
</dbReference>
<dbReference type="SUPFAM" id="SSF89963">
    <property type="entry name" value="YajQ-like"/>
    <property type="match status" value="2"/>
</dbReference>
<evidence type="ECO:0000255" key="1">
    <source>
        <dbReference type="HAMAP-Rule" id="MF_00632"/>
    </source>
</evidence>
<accession>Q8EAS7</accession>
<proteinExistence type="inferred from homology"/>
<reference key="1">
    <citation type="journal article" date="2002" name="Nat. Biotechnol.">
        <title>Genome sequence of the dissimilatory metal ion-reducing bacterium Shewanella oneidensis.</title>
        <authorList>
            <person name="Heidelberg J.F."/>
            <person name="Paulsen I.T."/>
            <person name="Nelson K.E."/>
            <person name="Gaidos E.J."/>
            <person name="Nelson W.C."/>
            <person name="Read T.D."/>
            <person name="Eisen J.A."/>
            <person name="Seshadri R."/>
            <person name="Ward N.L."/>
            <person name="Methe B.A."/>
            <person name="Clayton R.A."/>
            <person name="Meyer T."/>
            <person name="Tsapin A."/>
            <person name="Scott J."/>
            <person name="Beanan M.J."/>
            <person name="Brinkac L.M."/>
            <person name="Daugherty S.C."/>
            <person name="DeBoy R.T."/>
            <person name="Dodson R.J."/>
            <person name="Durkin A.S."/>
            <person name="Haft D.H."/>
            <person name="Kolonay J.F."/>
            <person name="Madupu R."/>
            <person name="Peterson J.D."/>
            <person name="Umayam L.A."/>
            <person name="White O."/>
            <person name="Wolf A.M."/>
            <person name="Vamathevan J.J."/>
            <person name="Weidman J.F."/>
            <person name="Impraim M."/>
            <person name="Lee K."/>
            <person name="Berry K.J."/>
            <person name="Lee C."/>
            <person name="Mueller J."/>
            <person name="Khouri H.M."/>
            <person name="Gill J."/>
            <person name="Utterback T.R."/>
            <person name="McDonald L.A."/>
            <person name="Feldblyum T.V."/>
            <person name="Smith H.O."/>
            <person name="Venter J.C."/>
            <person name="Nealson K.H."/>
            <person name="Fraser C.M."/>
        </authorList>
    </citation>
    <scope>NUCLEOTIDE SEQUENCE [LARGE SCALE GENOMIC DNA]</scope>
    <source>
        <strain>ATCC 700550 / JCM 31522 / CIP 106686 / LMG 19005 / NCIMB 14063 / MR-1</strain>
    </source>
</reference>
<comment type="function">
    <text evidence="1">Nucleotide-binding protein.</text>
</comment>
<comment type="similarity">
    <text evidence="1">Belongs to the YajQ family.</text>
</comment>
<protein>
    <recommendedName>
        <fullName evidence="1">Nucleotide-binding protein SO_3815</fullName>
    </recommendedName>
</protein>
<feature type="chain" id="PRO_0000106199" description="Nucleotide-binding protein SO_3815">
    <location>
        <begin position="1"/>
        <end position="161"/>
    </location>
</feature>
<gene>
    <name type="ordered locus">SO_3815</name>
</gene>